<feature type="signal peptide" evidence="2">
    <location>
        <begin position="1"/>
        <end position="21"/>
    </location>
</feature>
<feature type="chain" id="PRO_5001705166" description="Immunoglobulin lambda variable 10-54" evidence="2">
    <location>
        <begin position="22"/>
        <end position="117"/>
    </location>
</feature>
<feature type="domain" description="Ig-like" evidence="3">
    <location>
        <begin position="22"/>
        <end position="117" status="greater than"/>
    </location>
</feature>
<feature type="region of interest" description="Framework-1" evidence="1">
    <location>
        <begin position="20"/>
        <end position="43"/>
    </location>
</feature>
<feature type="region of interest" description="Complementarity-determining-1" evidence="1">
    <location>
        <begin position="44"/>
        <end position="52"/>
    </location>
</feature>
<feature type="region of interest" description="Framework-2" evidence="1">
    <location>
        <begin position="53"/>
        <end position="69"/>
    </location>
</feature>
<feature type="region of interest" description="Complementarity-determining-2" evidence="1">
    <location>
        <begin position="70"/>
        <end position="72"/>
    </location>
</feature>
<feature type="region of interest" description="Framework-3" evidence="1">
    <location>
        <begin position="73"/>
        <end position="108"/>
    </location>
</feature>
<feature type="region of interest" description="Complementarity-determining-3" evidence="1">
    <location>
        <begin position="109"/>
        <end position="117" status="greater than"/>
    </location>
</feature>
<feature type="disulfide bond" evidence="3">
    <location>
        <begin position="41"/>
        <end position="108"/>
    </location>
</feature>
<feature type="non-terminal residue">
    <location>
        <position position="117"/>
    </location>
</feature>
<organism>
    <name type="scientific">Homo sapiens</name>
    <name type="common">Human</name>
    <dbReference type="NCBI Taxonomy" id="9606"/>
    <lineage>
        <taxon>Eukaryota</taxon>
        <taxon>Metazoa</taxon>
        <taxon>Chordata</taxon>
        <taxon>Craniata</taxon>
        <taxon>Vertebrata</taxon>
        <taxon>Euteleostomi</taxon>
        <taxon>Mammalia</taxon>
        <taxon>Eutheria</taxon>
        <taxon>Euarchontoglires</taxon>
        <taxon>Primates</taxon>
        <taxon>Haplorrhini</taxon>
        <taxon>Catarrhini</taxon>
        <taxon>Hominidae</taxon>
        <taxon>Homo</taxon>
    </lineage>
</organism>
<keyword id="KW-1064">Adaptive immunity</keyword>
<keyword id="KW-1003">Cell membrane</keyword>
<keyword id="KW-1015">Disulfide bond</keyword>
<keyword id="KW-0391">Immunity</keyword>
<keyword id="KW-1280">Immunoglobulin</keyword>
<keyword id="KW-0393">Immunoglobulin domain</keyword>
<keyword id="KW-0472">Membrane</keyword>
<keyword id="KW-1267">Proteomics identification</keyword>
<keyword id="KW-1185">Reference proteome</keyword>
<keyword id="KW-0964">Secreted</keyword>
<keyword id="KW-0732">Signal</keyword>
<gene>
    <name evidence="4 9" type="primary">IGLV10-54</name>
</gene>
<evidence type="ECO:0000250" key="1">
    <source>
        <dbReference type="UniProtKB" id="P01721"/>
    </source>
</evidence>
<evidence type="ECO:0000255" key="2"/>
<evidence type="ECO:0000255" key="3">
    <source>
        <dbReference type="PROSITE-ProRule" id="PRU00114"/>
    </source>
</evidence>
<evidence type="ECO:0000303" key="4">
    <source>
    </source>
</evidence>
<evidence type="ECO:0000303" key="5">
    <source>
    </source>
</evidence>
<evidence type="ECO:0000303" key="6">
    <source>
    </source>
</evidence>
<evidence type="ECO:0000303" key="7">
    <source>
    </source>
</evidence>
<evidence type="ECO:0000303" key="8">
    <source>
    </source>
</evidence>
<evidence type="ECO:0000303" key="9">
    <source ref="3"/>
</evidence>
<evidence type="ECO:0000305" key="10"/>
<protein>
    <recommendedName>
        <fullName evidence="4 9">Immunoglobulin lambda variable 10-54</fullName>
    </recommendedName>
</protein>
<comment type="function">
    <text evidence="5 6 7 8">V region of the variable domain of immunoglobulin light chains that participates in the antigen recognition (PubMed:24600447). Immunoglobulins, also known as antibodies, are membrane-bound or secreted glycoproteins produced by B lymphocytes. In the recognition phase of humoral immunity, the membrane-bound immunoglobulins serve as receptors which, upon binding of a specific antigen, trigger the clonal expansion and differentiation of B lymphocytes into immunoglobulins-secreting plasma cells. Secreted immunoglobulins mediate the effector phase of humoral immunity, which results in the elimination of bound antigens (PubMed:20176268, PubMed:22158414). The antigen binding site is formed by the variable domain of one heavy chain, together with that of its associated light chain. Thus, each immunoglobulin has two antigen binding sites with remarkable affinity for a particular antigen. The variable domains are assembled by a process called V-(D)-J rearrangement and can then be subjected to somatic hypermutations which, after exposure to antigen and selection, allow affinity maturation for a particular antigen (PubMed:17576170, PubMed:20176268).</text>
</comment>
<comment type="subunit">
    <text evidence="6">Immunoglobulins are composed of two identical heavy chains and two identical light chains; disulfide-linked.</text>
</comment>
<comment type="subcellular location">
    <subcellularLocation>
        <location evidence="6 7">Secreted</location>
    </subcellularLocation>
    <subcellularLocation>
        <location evidence="6 7">Cell membrane</location>
    </subcellularLocation>
</comment>
<comment type="polymorphism">
    <text>There are several alleles. The sequence shown is that of IMGT allele IGLV10-54*02.</text>
</comment>
<comment type="caution">
    <text evidence="10">For an example of a full-length immunoglobulin lambda light chain see AC P0DOX8.</text>
</comment>
<name>LVX54_HUMAN</name>
<reference key="1">
    <citation type="journal article" date="1999" name="Nature">
        <title>The DNA sequence of human chromosome 22.</title>
        <authorList>
            <person name="Dunham I."/>
            <person name="Hunt A.R."/>
            <person name="Collins J.E."/>
            <person name="Bruskiewich R."/>
            <person name="Beare D.M."/>
            <person name="Clamp M."/>
            <person name="Smink L.J."/>
            <person name="Ainscough R."/>
            <person name="Almeida J.P."/>
            <person name="Babbage A.K."/>
            <person name="Bagguley C."/>
            <person name="Bailey J."/>
            <person name="Barlow K.F."/>
            <person name="Bates K.N."/>
            <person name="Beasley O.P."/>
            <person name="Bird C.P."/>
            <person name="Blakey S.E."/>
            <person name="Bridgeman A.M."/>
            <person name="Buck D."/>
            <person name="Burgess J."/>
            <person name="Burrill W.D."/>
            <person name="Burton J."/>
            <person name="Carder C."/>
            <person name="Carter N.P."/>
            <person name="Chen Y."/>
            <person name="Clark G."/>
            <person name="Clegg S.M."/>
            <person name="Cobley V.E."/>
            <person name="Cole C.G."/>
            <person name="Collier R.E."/>
            <person name="Connor R."/>
            <person name="Conroy D."/>
            <person name="Corby N.R."/>
            <person name="Coville G.J."/>
            <person name="Cox A.V."/>
            <person name="Davis J."/>
            <person name="Dawson E."/>
            <person name="Dhami P.D."/>
            <person name="Dockree C."/>
            <person name="Dodsworth S.J."/>
            <person name="Durbin R.M."/>
            <person name="Ellington A.G."/>
            <person name="Evans K.L."/>
            <person name="Fey J.M."/>
            <person name="Fleming K."/>
            <person name="French L."/>
            <person name="Garner A.A."/>
            <person name="Gilbert J.G.R."/>
            <person name="Goward M.E."/>
            <person name="Grafham D.V."/>
            <person name="Griffiths M.N.D."/>
            <person name="Hall C."/>
            <person name="Hall R.E."/>
            <person name="Hall-Tamlyn G."/>
            <person name="Heathcott R.W."/>
            <person name="Ho S."/>
            <person name="Holmes S."/>
            <person name="Hunt S.E."/>
            <person name="Jones M.C."/>
            <person name="Kershaw J."/>
            <person name="Kimberley A.M."/>
            <person name="King A."/>
            <person name="Laird G.K."/>
            <person name="Langford C.F."/>
            <person name="Leversha M.A."/>
            <person name="Lloyd C."/>
            <person name="Lloyd D.M."/>
            <person name="Martyn I.D."/>
            <person name="Mashreghi-Mohammadi M."/>
            <person name="Matthews L.H."/>
            <person name="Mccann O.T."/>
            <person name="Mcclay J."/>
            <person name="Mclaren S."/>
            <person name="McMurray A.A."/>
            <person name="Milne S.A."/>
            <person name="Mortimore B.J."/>
            <person name="Odell C.N."/>
            <person name="Pavitt R."/>
            <person name="Pearce A.V."/>
            <person name="Pearson D."/>
            <person name="Phillimore B.J.C.T."/>
            <person name="Phillips S.H."/>
            <person name="Plumb R.W."/>
            <person name="Ramsay H."/>
            <person name="Ramsey Y."/>
            <person name="Rogers L."/>
            <person name="Ross M.T."/>
            <person name="Scott C.E."/>
            <person name="Sehra H.K."/>
            <person name="Skuce C.D."/>
            <person name="Smalley S."/>
            <person name="Smith M.L."/>
            <person name="Soderlund C."/>
            <person name="Spragon L."/>
            <person name="Steward C.A."/>
            <person name="Sulston J.E."/>
            <person name="Swann R.M."/>
            <person name="Vaudin M."/>
            <person name="Wall M."/>
            <person name="Wallis J.M."/>
            <person name="Whiteley M.N."/>
            <person name="Willey D.L."/>
            <person name="Williams L."/>
            <person name="Williams S.A."/>
            <person name="Williamson H."/>
            <person name="Wilmer T.E."/>
            <person name="Wilming L."/>
            <person name="Wright C.L."/>
            <person name="Hubbard T."/>
            <person name="Bentley D.R."/>
            <person name="Beck S."/>
            <person name="Rogers J."/>
            <person name="Shimizu N."/>
            <person name="Minoshima S."/>
            <person name="Kawasaki K."/>
            <person name="Sasaki T."/>
            <person name="Asakawa S."/>
            <person name="Kudoh J."/>
            <person name="Shintani A."/>
            <person name="Shibuya K."/>
            <person name="Yoshizaki Y."/>
            <person name="Aoki N."/>
            <person name="Mitsuyama S."/>
            <person name="Roe B.A."/>
            <person name="Chen F."/>
            <person name="Chu L."/>
            <person name="Crabtree J."/>
            <person name="Deschamps S."/>
            <person name="Do A."/>
            <person name="Do T."/>
            <person name="Dorman A."/>
            <person name="Fang F."/>
            <person name="Fu Y."/>
            <person name="Hu P."/>
            <person name="Hua A."/>
            <person name="Kenton S."/>
            <person name="Lai H."/>
            <person name="Lao H.I."/>
            <person name="Lewis J."/>
            <person name="Lewis S."/>
            <person name="Lin S.-P."/>
            <person name="Loh P."/>
            <person name="Malaj E."/>
            <person name="Nguyen T."/>
            <person name="Pan H."/>
            <person name="Phan S."/>
            <person name="Qi S."/>
            <person name="Qian Y."/>
            <person name="Ray L."/>
            <person name="Ren Q."/>
            <person name="Shaull S."/>
            <person name="Sloan D."/>
            <person name="Song L."/>
            <person name="Wang Q."/>
            <person name="Wang Y."/>
            <person name="Wang Z."/>
            <person name="White J."/>
            <person name="Willingham D."/>
            <person name="Wu H."/>
            <person name="Yao Z."/>
            <person name="Zhan M."/>
            <person name="Zhang G."/>
            <person name="Chissoe S."/>
            <person name="Murray J."/>
            <person name="Miller N."/>
            <person name="Minx P."/>
            <person name="Fulton R."/>
            <person name="Johnson D."/>
            <person name="Bemis G."/>
            <person name="Bentley D."/>
            <person name="Bradshaw H."/>
            <person name="Bourne S."/>
            <person name="Cordes M."/>
            <person name="Du Z."/>
            <person name="Fulton L."/>
            <person name="Goela D."/>
            <person name="Graves T."/>
            <person name="Hawkins J."/>
            <person name="Hinds K."/>
            <person name="Kemp K."/>
            <person name="Latreille P."/>
            <person name="Layman D."/>
            <person name="Ozersky P."/>
            <person name="Rohlfing T."/>
            <person name="Scheet P."/>
            <person name="Walker C."/>
            <person name="Wamsley A."/>
            <person name="Wohldmann P."/>
            <person name="Pepin K."/>
            <person name="Nelson J."/>
            <person name="Korf I."/>
            <person name="Bedell J.A."/>
            <person name="Hillier L.W."/>
            <person name="Mardis E."/>
            <person name="Waterston R."/>
            <person name="Wilson R."/>
            <person name="Emanuel B.S."/>
            <person name="Shaikh T."/>
            <person name="Kurahashi H."/>
            <person name="Saitta S."/>
            <person name="Budarf M.L."/>
            <person name="McDermid H.E."/>
            <person name="Johnson A."/>
            <person name="Wong A.C.C."/>
            <person name="Morrow B.E."/>
            <person name="Edelmann L."/>
            <person name="Kim U.J."/>
            <person name="Shizuya H."/>
            <person name="Simon M.I."/>
            <person name="Dumanski J.P."/>
            <person name="Peyrard M."/>
            <person name="Kedra D."/>
            <person name="Seroussi E."/>
            <person name="Fransson I."/>
            <person name="Tapia I."/>
            <person name="Bruder C.E."/>
            <person name="O'Brien K.P."/>
            <person name="Wilkinson P."/>
            <person name="Bodenteich A."/>
            <person name="Hartman K."/>
            <person name="Hu X."/>
            <person name="Khan A.S."/>
            <person name="Lane L."/>
            <person name="Tilahun Y."/>
            <person name="Wright H."/>
        </authorList>
    </citation>
    <scope>NUCLEOTIDE SEQUENCE [LARGE SCALE GENOMIC DNA] (IMGT ALLELE IGLV10-54*02)</scope>
</reference>
<reference key="2">
    <citation type="journal article" date="2001" name="Exp. Clin. Immunogenet.">
        <title>Nomenclature of the human immunoglobulin lambda (IGL) genes.</title>
        <authorList>
            <person name="Lefranc M.P."/>
        </authorList>
    </citation>
    <scope>NOMENCLATURE</scope>
</reference>
<reference key="3">
    <citation type="book" date="2001" name="The Immunoglobulin FactsBook.">
        <title>The Immunoglobulin FactsBook.</title>
        <editorList>
            <person name="Lefranc M.P."/>
            <person name="Lefranc G."/>
        </editorList>
        <authorList>
            <person name="Lefranc M.P."/>
            <person name="Lefranc G."/>
        </authorList>
    </citation>
    <scope>NOMENCLATURE</scope>
</reference>
<reference key="4">
    <citation type="journal article" date="2007" name="Annu. Rev. Genet.">
        <title>Immunoglobulin somatic hypermutation.</title>
        <authorList>
            <person name="Teng G."/>
            <person name="Papavasiliou F.N."/>
        </authorList>
    </citation>
    <scope>REVIEW ON SOMATIC HYPERMUTATION</scope>
</reference>
<reference key="5">
    <citation type="journal article" date="2010" name="J. Allergy Clin. Immunol.">
        <title>Structure and function of immunoglobulins.</title>
        <authorList>
            <person name="Schroeder H.W. Jr."/>
            <person name="Cavacini L."/>
        </authorList>
    </citation>
    <scope>REVIEW ON IMMUNOGLOBULINS</scope>
</reference>
<reference key="6">
    <citation type="journal article" date="2012" name="Nat. Rev. Immunol.">
        <title>Molecular programming of B cell memory.</title>
        <authorList>
            <person name="McHeyzer-Williams M."/>
            <person name="Okitsu S."/>
            <person name="Wang N."/>
            <person name="McHeyzer-Williams L."/>
        </authorList>
    </citation>
    <scope>REVIEW ON FUNCTION</scope>
</reference>
<reference key="7">
    <citation type="journal article" date="2014" name="Front. Immunol.">
        <title>Immunoglobulin and T Cell Receptor Genes: IMGT((R)) and the Birth and Rise of Immunoinformatics.</title>
        <authorList>
            <person name="Lefranc M.P."/>
        </authorList>
    </citation>
    <scope>NOMENCLATURE</scope>
</reference>
<sequence length="117" mass="12395">MPWALLLLTLLTHSAVSVVQAGLTQPPSVSKGLRQTATLTCTGNSNIVGNQGAAWLQQHQGHPPKLLSYRNNNRPSGISERFSASRSGNTASLTITGLQPEDEADYYCSALDSSLSA</sequence>
<dbReference type="EMBL" id="AC245060">
    <property type="status" value="NOT_ANNOTATED_CDS"/>
    <property type="molecule type" value="Genomic_DNA"/>
</dbReference>
<dbReference type="SMR" id="A0A075B6I4"/>
<dbReference type="FunCoup" id="A0A075B6I4">
    <property type="interactions" value="227"/>
</dbReference>
<dbReference type="IMGT_GENE-DB" id="IGLV10-54"/>
<dbReference type="BioMuta" id="IGLV10-54"/>
<dbReference type="MassIVE" id="A0A075B6I4"/>
<dbReference type="Ensembl" id="ENST00000390287.2">
    <property type="protein sequence ID" value="ENSP00000374822.2"/>
    <property type="gene ID" value="ENSG00000211642.4"/>
</dbReference>
<dbReference type="UCSC" id="uc032qho.2">
    <property type="organism name" value="human"/>
</dbReference>
<dbReference type="AGR" id="HGNC:5884"/>
<dbReference type="GeneCards" id="IGLV10-54"/>
<dbReference type="HGNC" id="HGNC:5884">
    <property type="gene designation" value="IGLV10-54"/>
</dbReference>
<dbReference type="HPA" id="ENSG00000211642">
    <property type="expression patterns" value="Group enriched (breast, intestine, lymphoid tissue, salivary gland, stomach)"/>
</dbReference>
<dbReference type="neXtProt" id="NX_A0A075B6I4"/>
<dbReference type="OpenTargets" id="ENSG00000211642"/>
<dbReference type="VEuPathDB" id="HostDB:ENSG00000211642"/>
<dbReference type="GeneTree" id="ENSGT00940000154293"/>
<dbReference type="HOGENOM" id="CLU_077975_4_0_1"/>
<dbReference type="InParanoid" id="A0A075B6I4"/>
<dbReference type="OrthoDB" id="8908372at2759"/>
<dbReference type="PAN-GO" id="A0A075B6I4">
    <property type="GO annotations" value="3 GO annotations based on evolutionary models"/>
</dbReference>
<dbReference type="PhylomeDB" id="A0A075B6I4"/>
<dbReference type="SignaLink" id="A0A075B6I4"/>
<dbReference type="Pharos" id="A0A075B6I4">
    <property type="development level" value="Tdark"/>
</dbReference>
<dbReference type="PRO" id="PR:A0A075B6I4"/>
<dbReference type="Proteomes" id="UP000005640">
    <property type="component" value="Chromosome 22"/>
</dbReference>
<dbReference type="RNAct" id="A0A075B6I4">
    <property type="molecule type" value="protein"/>
</dbReference>
<dbReference type="Bgee" id="ENSG00000211642">
    <property type="expression patterns" value="Expressed in vermiform appendix and 83 other cell types or tissues"/>
</dbReference>
<dbReference type="GO" id="GO:0005576">
    <property type="term" value="C:extracellular region"/>
    <property type="evidence" value="ECO:0007669"/>
    <property type="project" value="UniProtKB-SubCell"/>
</dbReference>
<dbReference type="GO" id="GO:0019814">
    <property type="term" value="C:immunoglobulin complex"/>
    <property type="evidence" value="ECO:0000318"/>
    <property type="project" value="GO_Central"/>
</dbReference>
<dbReference type="GO" id="GO:0005886">
    <property type="term" value="C:plasma membrane"/>
    <property type="evidence" value="ECO:0007669"/>
    <property type="project" value="UniProtKB-SubCell"/>
</dbReference>
<dbReference type="GO" id="GO:0002250">
    <property type="term" value="P:adaptive immune response"/>
    <property type="evidence" value="ECO:0007669"/>
    <property type="project" value="UniProtKB-KW"/>
</dbReference>
<dbReference type="GO" id="GO:0006955">
    <property type="term" value="P:immune response"/>
    <property type="evidence" value="ECO:0000318"/>
    <property type="project" value="GO_Central"/>
</dbReference>
<dbReference type="Gene3D" id="2.60.40.10">
    <property type="entry name" value="Immunoglobulins"/>
    <property type="match status" value="1"/>
</dbReference>
<dbReference type="InterPro" id="IPR007110">
    <property type="entry name" value="Ig-like_dom"/>
</dbReference>
<dbReference type="InterPro" id="IPR036179">
    <property type="entry name" value="Ig-like_dom_sf"/>
</dbReference>
<dbReference type="InterPro" id="IPR013783">
    <property type="entry name" value="Ig-like_fold"/>
</dbReference>
<dbReference type="InterPro" id="IPR013106">
    <property type="entry name" value="Ig_V-set"/>
</dbReference>
<dbReference type="InterPro" id="IPR050150">
    <property type="entry name" value="IgV_Light_Chain"/>
</dbReference>
<dbReference type="PANTHER" id="PTHR23267">
    <property type="entry name" value="IMMUNOGLOBULIN LIGHT CHAIN"/>
    <property type="match status" value="1"/>
</dbReference>
<dbReference type="Pfam" id="PF07686">
    <property type="entry name" value="V-set"/>
    <property type="match status" value="1"/>
</dbReference>
<dbReference type="SMART" id="SM00406">
    <property type="entry name" value="IGv"/>
    <property type="match status" value="1"/>
</dbReference>
<dbReference type="SUPFAM" id="SSF48726">
    <property type="entry name" value="Immunoglobulin"/>
    <property type="match status" value="1"/>
</dbReference>
<dbReference type="PROSITE" id="PS50835">
    <property type="entry name" value="IG_LIKE"/>
    <property type="match status" value="1"/>
</dbReference>
<accession>A0A075B6I4</accession>
<proteinExistence type="evidence at protein level"/>